<dbReference type="EC" id="1.3.1.89" evidence="1"/>
<dbReference type="EC" id="1.3.1.-" evidence="3"/>
<dbReference type="EMBL" id="AAHF01000004">
    <property type="protein sequence ID" value="EAL90808.1"/>
    <property type="molecule type" value="Genomic_DNA"/>
</dbReference>
<dbReference type="RefSeq" id="XP_752846.1">
    <property type="nucleotide sequence ID" value="XM_747753.1"/>
</dbReference>
<dbReference type="SMR" id="Q4WRX4"/>
<dbReference type="FunCoup" id="Q4WRX4">
    <property type="interactions" value="900"/>
</dbReference>
<dbReference type="STRING" id="330879.Q4WRX4"/>
<dbReference type="EnsemblFungi" id="EAL90808">
    <property type="protein sequence ID" value="EAL90808"/>
    <property type="gene ID" value="AFUA_1G14770"/>
</dbReference>
<dbReference type="GeneID" id="3509869"/>
<dbReference type="KEGG" id="afm:AFUA_1G14770"/>
<dbReference type="VEuPathDB" id="FungiDB:Afu1g14770"/>
<dbReference type="eggNOG" id="KOG2333">
    <property type="taxonomic scope" value="Eukaryota"/>
</dbReference>
<dbReference type="HOGENOM" id="CLU_013299_7_0_1"/>
<dbReference type="InParanoid" id="Q4WRX4"/>
<dbReference type="OMA" id="WSYIAEC"/>
<dbReference type="OrthoDB" id="259935at2759"/>
<dbReference type="Proteomes" id="UP000002530">
    <property type="component" value="Chromosome 1"/>
</dbReference>
<dbReference type="GO" id="GO:0005737">
    <property type="term" value="C:cytoplasm"/>
    <property type="evidence" value="ECO:0007669"/>
    <property type="project" value="UniProtKB-SubCell"/>
</dbReference>
<dbReference type="GO" id="GO:0034399">
    <property type="term" value="C:nuclear periphery"/>
    <property type="evidence" value="ECO:0007669"/>
    <property type="project" value="EnsemblFungi"/>
</dbReference>
<dbReference type="GO" id="GO:0050660">
    <property type="term" value="F:flavin adenine dinucleotide binding"/>
    <property type="evidence" value="ECO:0007669"/>
    <property type="project" value="InterPro"/>
</dbReference>
<dbReference type="GO" id="GO:0106414">
    <property type="term" value="F:mRNA dihydrouridine synthase activity"/>
    <property type="evidence" value="ECO:0007669"/>
    <property type="project" value="RHEA"/>
</dbReference>
<dbReference type="GO" id="GO:0017150">
    <property type="term" value="F:tRNA dihydrouridine synthase activity"/>
    <property type="evidence" value="ECO:0000318"/>
    <property type="project" value="GO_Central"/>
</dbReference>
<dbReference type="GO" id="GO:0102265">
    <property type="term" value="F:tRNA-dihydrouridine47 synthase activity"/>
    <property type="evidence" value="ECO:0007669"/>
    <property type="project" value="UniProtKB-EC"/>
</dbReference>
<dbReference type="GO" id="GO:0008270">
    <property type="term" value="F:zinc ion binding"/>
    <property type="evidence" value="ECO:0007669"/>
    <property type="project" value="UniProtKB-KW"/>
</dbReference>
<dbReference type="GO" id="GO:0006397">
    <property type="term" value="P:mRNA processing"/>
    <property type="evidence" value="ECO:0007669"/>
    <property type="project" value="UniProtKB-KW"/>
</dbReference>
<dbReference type="CDD" id="cd02801">
    <property type="entry name" value="DUS_like_FMN"/>
    <property type="match status" value="1"/>
</dbReference>
<dbReference type="FunFam" id="3.20.20.70:FF:000145">
    <property type="entry name" value="tRNA-dihydrouridine(47) synthase [NAD(P)(+)]"/>
    <property type="match status" value="1"/>
</dbReference>
<dbReference type="Gene3D" id="3.20.20.70">
    <property type="entry name" value="Aldolase class I"/>
    <property type="match status" value="1"/>
</dbReference>
<dbReference type="Gene3D" id="4.10.1000.10">
    <property type="entry name" value="Zinc finger, CCCH-type"/>
    <property type="match status" value="1"/>
</dbReference>
<dbReference type="InterPro" id="IPR013785">
    <property type="entry name" value="Aldolase_TIM"/>
</dbReference>
<dbReference type="InterPro" id="IPR035587">
    <property type="entry name" value="DUS-like_FMN-bd"/>
</dbReference>
<dbReference type="InterPro" id="IPR018517">
    <property type="entry name" value="tRNA_hU_synthase_CS"/>
</dbReference>
<dbReference type="InterPro" id="IPR000571">
    <property type="entry name" value="Znf_CCCH"/>
</dbReference>
<dbReference type="PANTHER" id="PTHR45846">
    <property type="entry name" value="TRNA-DIHYDROURIDINE(47) SYNTHASE [NAD(P)(+)]-LIKE"/>
    <property type="match status" value="1"/>
</dbReference>
<dbReference type="PANTHER" id="PTHR45846:SF1">
    <property type="entry name" value="TRNA-DIHYDROURIDINE(47) SYNTHASE [NAD(P)(+)]-LIKE"/>
    <property type="match status" value="1"/>
</dbReference>
<dbReference type="Pfam" id="PF01207">
    <property type="entry name" value="Dus"/>
    <property type="match status" value="2"/>
</dbReference>
<dbReference type="SUPFAM" id="SSF51395">
    <property type="entry name" value="FMN-linked oxidoreductases"/>
    <property type="match status" value="1"/>
</dbReference>
<dbReference type="PROSITE" id="PS01136">
    <property type="entry name" value="UPF0034"/>
    <property type="match status" value="1"/>
</dbReference>
<dbReference type="PROSITE" id="PS50103">
    <property type="entry name" value="ZF_C3H1"/>
    <property type="match status" value="2"/>
</dbReference>
<proteinExistence type="inferred from homology"/>
<reference key="1">
    <citation type="journal article" date="2005" name="Nature">
        <title>Genomic sequence of the pathogenic and allergenic filamentous fungus Aspergillus fumigatus.</title>
        <authorList>
            <person name="Nierman W.C."/>
            <person name="Pain A."/>
            <person name="Anderson M.J."/>
            <person name="Wortman J.R."/>
            <person name="Kim H.S."/>
            <person name="Arroyo J."/>
            <person name="Berriman M."/>
            <person name="Abe K."/>
            <person name="Archer D.B."/>
            <person name="Bermejo C."/>
            <person name="Bennett J.W."/>
            <person name="Bowyer P."/>
            <person name="Chen D."/>
            <person name="Collins M."/>
            <person name="Coulsen R."/>
            <person name="Davies R."/>
            <person name="Dyer P.S."/>
            <person name="Farman M.L."/>
            <person name="Fedorova N."/>
            <person name="Fedorova N.D."/>
            <person name="Feldblyum T.V."/>
            <person name="Fischer R."/>
            <person name="Fosker N."/>
            <person name="Fraser A."/>
            <person name="Garcia J.L."/>
            <person name="Garcia M.J."/>
            <person name="Goble A."/>
            <person name="Goldman G.H."/>
            <person name="Gomi K."/>
            <person name="Griffith-Jones S."/>
            <person name="Gwilliam R."/>
            <person name="Haas B.J."/>
            <person name="Haas H."/>
            <person name="Harris D.E."/>
            <person name="Horiuchi H."/>
            <person name="Huang J."/>
            <person name="Humphray S."/>
            <person name="Jimenez J."/>
            <person name="Keller N."/>
            <person name="Khouri H."/>
            <person name="Kitamoto K."/>
            <person name="Kobayashi T."/>
            <person name="Konzack S."/>
            <person name="Kulkarni R."/>
            <person name="Kumagai T."/>
            <person name="Lafton A."/>
            <person name="Latge J.-P."/>
            <person name="Li W."/>
            <person name="Lord A."/>
            <person name="Lu C."/>
            <person name="Majoros W.H."/>
            <person name="May G.S."/>
            <person name="Miller B.L."/>
            <person name="Mohamoud Y."/>
            <person name="Molina M."/>
            <person name="Monod M."/>
            <person name="Mouyna I."/>
            <person name="Mulligan S."/>
            <person name="Murphy L.D."/>
            <person name="O'Neil S."/>
            <person name="Paulsen I."/>
            <person name="Penalva M.A."/>
            <person name="Pertea M."/>
            <person name="Price C."/>
            <person name="Pritchard B.L."/>
            <person name="Quail M.A."/>
            <person name="Rabbinowitsch E."/>
            <person name="Rawlins N."/>
            <person name="Rajandream M.A."/>
            <person name="Reichard U."/>
            <person name="Renauld H."/>
            <person name="Robson G.D."/>
            <person name="Rodriguez de Cordoba S."/>
            <person name="Rodriguez-Pena J.M."/>
            <person name="Ronning C.M."/>
            <person name="Rutter S."/>
            <person name="Salzberg S.L."/>
            <person name="Sanchez M."/>
            <person name="Sanchez-Ferrero J.C."/>
            <person name="Saunders D."/>
            <person name="Seeger K."/>
            <person name="Squares R."/>
            <person name="Squares S."/>
            <person name="Takeuchi M."/>
            <person name="Tekaia F."/>
            <person name="Turner G."/>
            <person name="Vazquez de Aldana C.R."/>
            <person name="Weidman J."/>
            <person name="White O."/>
            <person name="Woodward J.R."/>
            <person name="Yu J.-H."/>
            <person name="Fraser C.M."/>
            <person name="Galagan J.E."/>
            <person name="Asai K."/>
            <person name="Machida M."/>
            <person name="Hall N."/>
            <person name="Barrell B.G."/>
            <person name="Denning D.W."/>
        </authorList>
    </citation>
    <scope>NUCLEOTIDE SEQUENCE [LARGE SCALE GENOMIC DNA]</scope>
    <source>
        <strain>ATCC MYA-4609 / CBS 101355 / FGSC A1100 / Af293</strain>
    </source>
</reference>
<name>DUS3_ASPFU</name>
<accession>Q4WRX4</accession>
<comment type="function">
    <text evidence="1 3">Catalyzes the synthesis of dihydrouridine, a modified base found in the D-loop of most tRNAs. Specifically modifies U47 in cytoplasmic tRNAs (By similarity). Catalyzes the synthesis of dihydrouridine in some mRNAs, thereby affecting their translation (By similarity).</text>
</comment>
<comment type="catalytic activity">
    <reaction evidence="1">
        <text>5,6-dihydrouridine(47) in tRNA + NAD(+) = uridine(47) in tRNA + NADH + H(+)</text>
        <dbReference type="Rhea" id="RHEA:53364"/>
        <dbReference type="Rhea" id="RHEA-COMP:13539"/>
        <dbReference type="Rhea" id="RHEA-COMP:13540"/>
        <dbReference type="ChEBI" id="CHEBI:15378"/>
        <dbReference type="ChEBI" id="CHEBI:57540"/>
        <dbReference type="ChEBI" id="CHEBI:57945"/>
        <dbReference type="ChEBI" id="CHEBI:65315"/>
        <dbReference type="ChEBI" id="CHEBI:74443"/>
        <dbReference type="EC" id="1.3.1.89"/>
    </reaction>
    <physiologicalReaction direction="right-to-left" evidence="1">
        <dbReference type="Rhea" id="RHEA:53366"/>
    </physiologicalReaction>
</comment>
<comment type="catalytic activity">
    <reaction evidence="1">
        <text>5,6-dihydrouridine(47) in tRNA + NADP(+) = uridine(47) in tRNA + NADPH + H(+)</text>
        <dbReference type="Rhea" id="RHEA:53360"/>
        <dbReference type="Rhea" id="RHEA-COMP:13539"/>
        <dbReference type="Rhea" id="RHEA-COMP:13540"/>
        <dbReference type="ChEBI" id="CHEBI:15378"/>
        <dbReference type="ChEBI" id="CHEBI:57783"/>
        <dbReference type="ChEBI" id="CHEBI:58349"/>
        <dbReference type="ChEBI" id="CHEBI:65315"/>
        <dbReference type="ChEBI" id="CHEBI:74443"/>
        <dbReference type="EC" id="1.3.1.89"/>
    </reaction>
    <physiologicalReaction direction="right-to-left" evidence="1">
        <dbReference type="Rhea" id="RHEA:53362"/>
    </physiologicalReaction>
</comment>
<comment type="catalytic activity">
    <reaction evidence="3">
        <text>a 5,6-dihydrouridine in mRNA + NAD(+) = a uridine in mRNA + NADH + H(+)</text>
        <dbReference type="Rhea" id="RHEA:69851"/>
        <dbReference type="Rhea" id="RHEA-COMP:14658"/>
        <dbReference type="Rhea" id="RHEA-COMP:17789"/>
        <dbReference type="ChEBI" id="CHEBI:15378"/>
        <dbReference type="ChEBI" id="CHEBI:57540"/>
        <dbReference type="ChEBI" id="CHEBI:57945"/>
        <dbReference type="ChEBI" id="CHEBI:65315"/>
        <dbReference type="ChEBI" id="CHEBI:74443"/>
    </reaction>
    <physiologicalReaction direction="right-to-left" evidence="3">
        <dbReference type="Rhea" id="RHEA:69853"/>
    </physiologicalReaction>
</comment>
<comment type="catalytic activity">
    <reaction evidence="3">
        <text>a 5,6-dihydrouridine in mRNA + NADP(+) = a uridine in mRNA + NADPH + H(+)</text>
        <dbReference type="Rhea" id="RHEA:69855"/>
        <dbReference type="Rhea" id="RHEA-COMP:14658"/>
        <dbReference type="Rhea" id="RHEA-COMP:17789"/>
        <dbReference type="ChEBI" id="CHEBI:15378"/>
        <dbReference type="ChEBI" id="CHEBI:57783"/>
        <dbReference type="ChEBI" id="CHEBI:58349"/>
        <dbReference type="ChEBI" id="CHEBI:65315"/>
        <dbReference type="ChEBI" id="CHEBI:74443"/>
    </reaction>
    <physiologicalReaction direction="right-to-left" evidence="3">
        <dbReference type="Rhea" id="RHEA:69857"/>
    </physiologicalReaction>
</comment>
<comment type="cofactor">
    <cofactor evidence="2">
        <name>FMN</name>
        <dbReference type="ChEBI" id="CHEBI:58210"/>
    </cofactor>
</comment>
<comment type="subcellular location">
    <subcellularLocation>
        <location evidence="1">Cytoplasm</location>
    </subcellularLocation>
    <subcellularLocation>
        <location evidence="1">Nucleus</location>
    </subcellularLocation>
</comment>
<comment type="similarity">
    <text evidence="6">Belongs to the Dus family. Dus3 subfamily.</text>
</comment>
<protein>
    <recommendedName>
        <fullName>tRNA-dihydrouridine(47) synthase [NAD(P)(+)]</fullName>
        <ecNumber evidence="1">1.3.1.89</ecNumber>
    </recommendedName>
    <alternativeName>
        <fullName>mRNA-dihydrouridine synthase dus3</fullName>
        <ecNumber evidence="3">1.3.1.-</ecNumber>
    </alternativeName>
    <alternativeName>
        <fullName>tRNA-dihydrouridine synthase 3</fullName>
    </alternativeName>
</protein>
<gene>
    <name type="primary">dus3</name>
    <name type="ORF">AFUA_1G14770</name>
</gene>
<evidence type="ECO:0000250" key="1">
    <source>
        <dbReference type="UniProtKB" id="Q06053"/>
    </source>
</evidence>
<evidence type="ECO:0000250" key="2">
    <source>
        <dbReference type="UniProtKB" id="Q5SMC7"/>
    </source>
</evidence>
<evidence type="ECO:0000250" key="3">
    <source>
        <dbReference type="UniProtKB" id="Q9UTH9"/>
    </source>
</evidence>
<evidence type="ECO:0000255" key="4">
    <source>
        <dbReference type="PROSITE-ProRule" id="PRU00723"/>
    </source>
</evidence>
<evidence type="ECO:0000256" key="5">
    <source>
        <dbReference type="SAM" id="MobiDB-lite"/>
    </source>
</evidence>
<evidence type="ECO:0000305" key="6"/>
<organism>
    <name type="scientific">Aspergillus fumigatus (strain ATCC MYA-4609 / CBS 101355 / FGSC A1100 / Af293)</name>
    <name type="common">Neosartorya fumigata</name>
    <dbReference type="NCBI Taxonomy" id="330879"/>
    <lineage>
        <taxon>Eukaryota</taxon>
        <taxon>Fungi</taxon>
        <taxon>Dikarya</taxon>
        <taxon>Ascomycota</taxon>
        <taxon>Pezizomycotina</taxon>
        <taxon>Eurotiomycetes</taxon>
        <taxon>Eurotiomycetidae</taxon>
        <taxon>Eurotiales</taxon>
        <taxon>Aspergillaceae</taxon>
        <taxon>Aspergillus</taxon>
        <taxon>Aspergillus subgen. Fumigati</taxon>
    </lineage>
</organism>
<keyword id="KW-0963">Cytoplasm</keyword>
<keyword id="KW-0285">Flavoprotein</keyword>
<keyword id="KW-0288">FMN</keyword>
<keyword id="KW-0479">Metal-binding</keyword>
<keyword id="KW-0507">mRNA processing</keyword>
<keyword id="KW-0520">NAD</keyword>
<keyword id="KW-0521">NADP</keyword>
<keyword id="KW-0539">Nucleus</keyword>
<keyword id="KW-0560">Oxidoreductase</keyword>
<keyword id="KW-1185">Reference proteome</keyword>
<keyword id="KW-0677">Repeat</keyword>
<keyword id="KW-0819">tRNA processing</keyword>
<keyword id="KW-0862">Zinc</keyword>
<keyword id="KW-0863">Zinc-finger</keyword>
<feature type="chain" id="PRO_0000330227" description="tRNA-dihydrouridine(47) synthase [NAD(P)(+)]">
    <location>
        <begin position="1"/>
        <end position="726"/>
    </location>
</feature>
<feature type="zinc finger region" description="C3H1-type 1" evidence="4">
    <location>
        <begin position="121"/>
        <end position="154"/>
    </location>
</feature>
<feature type="zinc finger region" description="C3H1-type 2" evidence="4">
    <location>
        <begin position="171"/>
        <end position="196"/>
    </location>
</feature>
<feature type="region of interest" description="Disordered" evidence="5">
    <location>
        <begin position="1"/>
        <end position="55"/>
    </location>
</feature>
<feature type="region of interest" description="Disordered" evidence="5">
    <location>
        <begin position="68"/>
        <end position="124"/>
    </location>
</feature>
<feature type="compositionally biased region" description="Polar residues" evidence="5">
    <location>
        <begin position="1"/>
        <end position="10"/>
    </location>
</feature>
<feature type="compositionally biased region" description="Basic and acidic residues" evidence="5">
    <location>
        <begin position="28"/>
        <end position="38"/>
    </location>
</feature>
<feature type="compositionally biased region" description="Low complexity" evidence="5">
    <location>
        <begin position="78"/>
        <end position="87"/>
    </location>
</feature>
<feature type="compositionally biased region" description="Basic and acidic residues" evidence="5">
    <location>
        <begin position="94"/>
        <end position="103"/>
    </location>
</feature>
<feature type="compositionally biased region" description="Basic and acidic residues" evidence="5">
    <location>
        <begin position="113"/>
        <end position="124"/>
    </location>
</feature>
<feature type="active site" description="Proton donor" evidence="2">
    <location>
        <position position="430"/>
    </location>
</feature>
<feature type="binding site" evidence="2">
    <location>
        <begin position="323"/>
        <end position="325"/>
    </location>
    <ligand>
        <name>FMN</name>
        <dbReference type="ChEBI" id="CHEBI:58210"/>
    </ligand>
</feature>
<feature type="binding site" evidence="2">
    <location>
        <position position="398"/>
    </location>
    <ligand>
        <name>FMN</name>
        <dbReference type="ChEBI" id="CHEBI:58210"/>
    </ligand>
</feature>
<feature type="binding site" evidence="2">
    <location>
        <position position="470"/>
    </location>
    <ligand>
        <name>FMN</name>
        <dbReference type="ChEBI" id="CHEBI:58210"/>
    </ligand>
</feature>
<feature type="binding site" evidence="2">
    <location>
        <position position="512"/>
    </location>
    <ligand>
        <name>FMN</name>
        <dbReference type="ChEBI" id="CHEBI:58210"/>
    </ligand>
</feature>
<feature type="binding site" evidence="2">
    <location>
        <begin position="569"/>
        <end position="571"/>
    </location>
    <ligand>
        <name>FMN</name>
        <dbReference type="ChEBI" id="CHEBI:58210"/>
    </ligand>
</feature>
<feature type="binding site" evidence="2">
    <location>
        <begin position="593"/>
        <end position="594"/>
    </location>
    <ligand>
        <name>FMN</name>
        <dbReference type="ChEBI" id="CHEBI:58210"/>
    </ligand>
</feature>
<sequence>MEPTTQTDPMTVTPKHELENGAAVAANDEEHPSKKQRLESISITEQEVSDGAPKRIKGVAPIKAEFLVQKSARSQPVEESALSLSADDAAEAAHYQEREGDQKGKKKASGQNKGRDFGRSEDAKGLCPSRAFSPEFSPKECKFGEKCRFEHDVRTYLKEHKREDLTTFGGICPIWDAKGRCPYGFKCRLVGSHMTERDTSDGRKELILLEDEERKKKARPVVPYASEDGLVNIVSNEDKIAVARRKTTTPRSDVYLAWLDKMSKALEKNLHGRHLEEGGADEGARAQTNDQVEENRAAYVEPPFLPSEKRRIYFGPETPTLAPLTTQGNLPFRRLCIDYGCQFTYSEMAMGMSLIQGQKSEWALMKAHESEALPPTISSTADVVQGYDNSKDFKFGAQIAGNKPWHAIKATELLSRLTPNLRVIDLNCGCPIDQVFREGAGSALLDHPSKLEKMLRGMNAVSEMIPITVKIRTGTRDNSPNATKLIERLVLGGHESGILNIGPPGVAAVTLHGRSRQQRYTKMADWSYIAECAALIKRLNEKKDDVTDTVREPDERMLPNGGKVFFLGNGDCYSHYDYDDHINNAGVDAVMVGRGAIIKPWVFEEIQAGQYLDKSATERLAMIEKYAKYGLDTWGSDEHGVGTTRRFMLEWLSFTYRYVPIGLLEYLPPHIQDRPPAWRGRNELETLLGSPNYKDWIKITEMFLGPAHKDFKFEPKHKSNAYEPQG</sequence>